<name>RF1_MYCSS</name>
<accession>Q1B542</accession>
<proteinExistence type="inferred from homology"/>
<feature type="chain" id="PRO_0000263298" description="Peptide chain release factor 1">
    <location>
        <begin position="1"/>
        <end position="357"/>
    </location>
</feature>
<feature type="modified residue" description="N5-methylglutamine" evidence="1">
    <location>
        <position position="236"/>
    </location>
</feature>
<protein>
    <recommendedName>
        <fullName evidence="1">Peptide chain release factor 1</fullName>
        <shortName evidence="1">RF-1</shortName>
    </recommendedName>
</protein>
<keyword id="KW-0963">Cytoplasm</keyword>
<keyword id="KW-0488">Methylation</keyword>
<keyword id="KW-0648">Protein biosynthesis</keyword>
<reference key="1">
    <citation type="submission" date="2006-06" db="EMBL/GenBank/DDBJ databases">
        <title>Complete sequence of chromosome of Mycobacterium sp. MCS.</title>
        <authorList>
            <consortium name="US DOE Joint Genome Institute"/>
            <person name="Copeland A."/>
            <person name="Lucas S."/>
            <person name="Lapidus A."/>
            <person name="Barry K."/>
            <person name="Detter J.C."/>
            <person name="Glavina del Rio T."/>
            <person name="Hammon N."/>
            <person name="Israni S."/>
            <person name="Dalin E."/>
            <person name="Tice H."/>
            <person name="Pitluck S."/>
            <person name="Martinez M."/>
            <person name="Schmutz J."/>
            <person name="Larimer F."/>
            <person name="Land M."/>
            <person name="Hauser L."/>
            <person name="Kyrpides N."/>
            <person name="Kim E."/>
            <person name="Miller C.D."/>
            <person name="Hughes J.E."/>
            <person name="Anderson A.J."/>
            <person name="Sims R.C."/>
            <person name="Richardson P."/>
        </authorList>
    </citation>
    <scope>NUCLEOTIDE SEQUENCE [LARGE SCALE GENOMIC DNA]</scope>
    <source>
        <strain>MCS</strain>
    </source>
</reference>
<gene>
    <name evidence="1" type="primary">prfA</name>
    <name type="ordered locus">Mmcs_3887</name>
</gene>
<organism>
    <name type="scientific">Mycobacterium sp. (strain MCS)</name>
    <dbReference type="NCBI Taxonomy" id="164756"/>
    <lineage>
        <taxon>Bacteria</taxon>
        <taxon>Bacillati</taxon>
        <taxon>Actinomycetota</taxon>
        <taxon>Actinomycetes</taxon>
        <taxon>Mycobacteriales</taxon>
        <taxon>Mycobacteriaceae</taxon>
        <taxon>Mycobacterium</taxon>
    </lineage>
</organism>
<comment type="function">
    <text evidence="1">Peptide chain release factor 1 directs the termination of translation in response to the peptide chain termination codons UAG and UAA.</text>
</comment>
<comment type="subcellular location">
    <subcellularLocation>
        <location evidence="1">Cytoplasm</location>
    </subcellularLocation>
</comment>
<comment type="PTM">
    <text evidence="1">Methylated by PrmC. Methylation increases the termination efficiency of RF1.</text>
</comment>
<comment type="similarity">
    <text evidence="1">Belongs to the prokaryotic/mitochondrial release factor family.</text>
</comment>
<sequence length="357" mass="38831">MSAPTTAIDALLAEHADLERQLADPALHADAGKARKAGRRFAQLAPIVATYRKLEAARGDLEAARELGADDASFAAEVPELEATVDQLETQLSDLLAPRDPHDADDIVLEVKSGEGGEESALFAADLARMYIRYAERHGWSVTILDETTSDLGGYKDATLSIRSKGDSADGVWSRLKFEGGVHRVQRVPVTESQGRVHTSAAGVLVYPEPEEVEQVQIDESDLRIDVYRSSGKGGQGVNTTDSAVRITHLPTGIVVTCQNERSQLQNKARAMQVLAARLQSLAEEQASADASADRASQIRTVDRSERIRTYNFPENRIADHRINFKAHNLDQVLDGDLDPLFDALAAADKQARLQSS</sequence>
<dbReference type="EMBL" id="CP000384">
    <property type="protein sequence ID" value="ABG09992.1"/>
    <property type="molecule type" value="Genomic_DNA"/>
</dbReference>
<dbReference type="SMR" id="Q1B542"/>
<dbReference type="KEGG" id="mmc:Mmcs_3887"/>
<dbReference type="HOGENOM" id="CLU_036856_0_6_11"/>
<dbReference type="BioCyc" id="MSP164756:G1G6O-3971-MONOMER"/>
<dbReference type="GO" id="GO:0005737">
    <property type="term" value="C:cytoplasm"/>
    <property type="evidence" value="ECO:0007669"/>
    <property type="project" value="UniProtKB-SubCell"/>
</dbReference>
<dbReference type="GO" id="GO:0016149">
    <property type="term" value="F:translation release factor activity, codon specific"/>
    <property type="evidence" value="ECO:0007669"/>
    <property type="project" value="UniProtKB-UniRule"/>
</dbReference>
<dbReference type="FunFam" id="3.30.160.20:FF:000004">
    <property type="entry name" value="Peptide chain release factor 1"/>
    <property type="match status" value="1"/>
</dbReference>
<dbReference type="Gene3D" id="3.30.160.20">
    <property type="match status" value="1"/>
</dbReference>
<dbReference type="Gene3D" id="3.30.70.1660">
    <property type="match status" value="1"/>
</dbReference>
<dbReference type="Gene3D" id="6.10.140.1950">
    <property type="match status" value="1"/>
</dbReference>
<dbReference type="HAMAP" id="MF_00093">
    <property type="entry name" value="Rel_fac_1"/>
    <property type="match status" value="1"/>
</dbReference>
<dbReference type="InterPro" id="IPR005139">
    <property type="entry name" value="PCRF"/>
</dbReference>
<dbReference type="InterPro" id="IPR000352">
    <property type="entry name" value="Pep_chain_release_fac_I"/>
</dbReference>
<dbReference type="InterPro" id="IPR045853">
    <property type="entry name" value="Pep_chain_release_fac_I_sf"/>
</dbReference>
<dbReference type="InterPro" id="IPR050057">
    <property type="entry name" value="Prokaryotic/Mito_RF"/>
</dbReference>
<dbReference type="InterPro" id="IPR004373">
    <property type="entry name" value="RF-1"/>
</dbReference>
<dbReference type="NCBIfam" id="TIGR00019">
    <property type="entry name" value="prfA"/>
    <property type="match status" value="1"/>
</dbReference>
<dbReference type="NCBIfam" id="NF001859">
    <property type="entry name" value="PRK00591.1"/>
    <property type="match status" value="1"/>
</dbReference>
<dbReference type="PANTHER" id="PTHR43804">
    <property type="entry name" value="LD18447P"/>
    <property type="match status" value="1"/>
</dbReference>
<dbReference type="PANTHER" id="PTHR43804:SF7">
    <property type="entry name" value="LD18447P"/>
    <property type="match status" value="1"/>
</dbReference>
<dbReference type="Pfam" id="PF03462">
    <property type="entry name" value="PCRF"/>
    <property type="match status" value="1"/>
</dbReference>
<dbReference type="Pfam" id="PF00472">
    <property type="entry name" value="RF-1"/>
    <property type="match status" value="1"/>
</dbReference>
<dbReference type="SMART" id="SM00937">
    <property type="entry name" value="PCRF"/>
    <property type="match status" value="1"/>
</dbReference>
<dbReference type="SUPFAM" id="SSF75620">
    <property type="entry name" value="Release factor"/>
    <property type="match status" value="1"/>
</dbReference>
<dbReference type="PROSITE" id="PS00745">
    <property type="entry name" value="RF_PROK_I"/>
    <property type="match status" value="1"/>
</dbReference>
<evidence type="ECO:0000255" key="1">
    <source>
        <dbReference type="HAMAP-Rule" id="MF_00093"/>
    </source>
</evidence>